<accession>A1VXU6</accession>
<keyword id="KW-0028">Amino-acid biosynthesis</keyword>
<keyword id="KW-0055">Arginine biosynthesis</keyword>
<keyword id="KW-0963">Cytoplasm</keyword>
<keyword id="KW-0521">NADP</keyword>
<keyword id="KW-0560">Oxidoreductase</keyword>
<name>ARGC_CAMJJ</name>
<sequence length="342" mass="38902">MKIKVGILGASGYAGNELVRILLNHPKVEISYLGSSSSVGQNYQDLYPNTLLNLCFENKNLDELELDLLFLATPHEFSAKLLNENLLKKMKIIDLSADFRLKNPKDYELWYKFTHPNQELLQNAVYGLCELYKEEIKKASLVANPGCYTTCSILSLYPLFKEKIIDFSSVIIDAKSGVSGAGRSAKVENLFCEVNENIKAYNLALHRHTPEIEEHLSYAAKKKITLQFTPHLVSMQRGILISAYANLKEDLQEQDIRDIYTKYYQNNKFIRLLPPQSLPQTRWVKSSNFADINFSVDQRTKRVIVLGAIDNLIKGAAGQAVQNMNLMFDFDEDEGLKFFANL</sequence>
<organism>
    <name type="scientific">Campylobacter jejuni subsp. jejuni serotype O:23/36 (strain 81-176)</name>
    <dbReference type="NCBI Taxonomy" id="354242"/>
    <lineage>
        <taxon>Bacteria</taxon>
        <taxon>Pseudomonadati</taxon>
        <taxon>Campylobacterota</taxon>
        <taxon>Epsilonproteobacteria</taxon>
        <taxon>Campylobacterales</taxon>
        <taxon>Campylobacteraceae</taxon>
        <taxon>Campylobacter</taxon>
    </lineage>
</organism>
<dbReference type="EC" id="1.2.1.38" evidence="1"/>
<dbReference type="EMBL" id="CP000538">
    <property type="protein sequence ID" value="EAQ73473.1"/>
    <property type="molecule type" value="Genomic_DNA"/>
</dbReference>
<dbReference type="RefSeq" id="WP_002869256.1">
    <property type="nucleotide sequence ID" value="NC_008787.1"/>
</dbReference>
<dbReference type="SMR" id="A1VXU6"/>
<dbReference type="KEGG" id="cjj:CJJ81176_0249"/>
<dbReference type="eggNOG" id="COG0002">
    <property type="taxonomic scope" value="Bacteria"/>
</dbReference>
<dbReference type="HOGENOM" id="CLU_006384_0_1_7"/>
<dbReference type="UniPathway" id="UPA00068">
    <property type="reaction ID" value="UER00108"/>
</dbReference>
<dbReference type="Proteomes" id="UP000000646">
    <property type="component" value="Chromosome"/>
</dbReference>
<dbReference type="GO" id="GO:0005737">
    <property type="term" value="C:cytoplasm"/>
    <property type="evidence" value="ECO:0007669"/>
    <property type="project" value="UniProtKB-SubCell"/>
</dbReference>
<dbReference type="GO" id="GO:0003942">
    <property type="term" value="F:N-acetyl-gamma-glutamyl-phosphate reductase activity"/>
    <property type="evidence" value="ECO:0007669"/>
    <property type="project" value="UniProtKB-UniRule"/>
</dbReference>
<dbReference type="GO" id="GO:0051287">
    <property type="term" value="F:NAD binding"/>
    <property type="evidence" value="ECO:0007669"/>
    <property type="project" value="InterPro"/>
</dbReference>
<dbReference type="GO" id="GO:0070401">
    <property type="term" value="F:NADP+ binding"/>
    <property type="evidence" value="ECO:0007669"/>
    <property type="project" value="InterPro"/>
</dbReference>
<dbReference type="GO" id="GO:0006526">
    <property type="term" value="P:L-arginine biosynthetic process"/>
    <property type="evidence" value="ECO:0007669"/>
    <property type="project" value="UniProtKB-UniRule"/>
</dbReference>
<dbReference type="CDD" id="cd23934">
    <property type="entry name" value="AGPR_1_C"/>
    <property type="match status" value="1"/>
</dbReference>
<dbReference type="CDD" id="cd17895">
    <property type="entry name" value="AGPR_1_N"/>
    <property type="match status" value="1"/>
</dbReference>
<dbReference type="FunFam" id="3.30.360.10:FF:000014">
    <property type="entry name" value="N-acetyl-gamma-glutamyl-phosphate reductase"/>
    <property type="match status" value="1"/>
</dbReference>
<dbReference type="Gene3D" id="3.30.360.10">
    <property type="entry name" value="Dihydrodipicolinate Reductase, domain 2"/>
    <property type="match status" value="1"/>
</dbReference>
<dbReference type="Gene3D" id="3.40.50.720">
    <property type="entry name" value="NAD(P)-binding Rossmann-like Domain"/>
    <property type="match status" value="1"/>
</dbReference>
<dbReference type="HAMAP" id="MF_00150">
    <property type="entry name" value="ArgC_type1"/>
    <property type="match status" value="1"/>
</dbReference>
<dbReference type="InterPro" id="IPR023013">
    <property type="entry name" value="AGPR_AS"/>
</dbReference>
<dbReference type="InterPro" id="IPR000706">
    <property type="entry name" value="AGPR_type-1"/>
</dbReference>
<dbReference type="InterPro" id="IPR036291">
    <property type="entry name" value="NAD(P)-bd_dom_sf"/>
</dbReference>
<dbReference type="InterPro" id="IPR050085">
    <property type="entry name" value="NAGSA_dehydrogenase"/>
</dbReference>
<dbReference type="InterPro" id="IPR000534">
    <property type="entry name" value="Semialdehyde_DH_NAD-bd"/>
</dbReference>
<dbReference type="NCBIfam" id="TIGR01850">
    <property type="entry name" value="argC"/>
    <property type="match status" value="1"/>
</dbReference>
<dbReference type="PANTHER" id="PTHR32338:SF10">
    <property type="entry name" value="N-ACETYL-GAMMA-GLUTAMYL-PHOSPHATE REDUCTASE, CHLOROPLASTIC-RELATED"/>
    <property type="match status" value="1"/>
</dbReference>
<dbReference type="PANTHER" id="PTHR32338">
    <property type="entry name" value="N-ACETYL-GAMMA-GLUTAMYL-PHOSPHATE REDUCTASE, CHLOROPLASTIC-RELATED-RELATED"/>
    <property type="match status" value="1"/>
</dbReference>
<dbReference type="Pfam" id="PF01118">
    <property type="entry name" value="Semialdhyde_dh"/>
    <property type="match status" value="1"/>
</dbReference>
<dbReference type="Pfam" id="PF22698">
    <property type="entry name" value="Semialdhyde_dhC_1"/>
    <property type="match status" value="1"/>
</dbReference>
<dbReference type="SMART" id="SM00859">
    <property type="entry name" value="Semialdhyde_dh"/>
    <property type="match status" value="1"/>
</dbReference>
<dbReference type="SUPFAM" id="SSF55347">
    <property type="entry name" value="Glyceraldehyde-3-phosphate dehydrogenase-like, C-terminal domain"/>
    <property type="match status" value="1"/>
</dbReference>
<dbReference type="SUPFAM" id="SSF51735">
    <property type="entry name" value="NAD(P)-binding Rossmann-fold domains"/>
    <property type="match status" value="1"/>
</dbReference>
<dbReference type="PROSITE" id="PS01224">
    <property type="entry name" value="ARGC"/>
    <property type="match status" value="1"/>
</dbReference>
<feature type="chain" id="PRO_1000010986" description="N-acetyl-gamma-glutamyl-phosphate reductase">
    <location>
        <begin position="1"/>
        <end position="342"/>
    </location>
</feature>
<feature type="active site" evidence="1">
    <location>
        <position position="147"/>
    </location>
</feature>
<protein>
    <recommendedName>
        <fullName evidence="1">N-acetyl-gamma-glutamyl-phosphate reductase</fullName>
        <shortName evidence="1">AGPR</shortName>
        <ecNumber evidence="1">1.2.1.38</ecNumber>
    </recommendedName>
    <alternativeName>
        <fullName evidence="1">N-acetyl-glutamate semialdehyde dehydrogenase</fullName>
        <shortName evidence="1">NAGSA dehydrogenase</shortName>
    </alternativeName>
</protein>
<evidence type="ECO:0000255" key="1">
    <source>
        <dbReference type="HAMAP-Rule" id="MF_00150"/>
    </source>
</evidence>
<proteinExistence type="inferred from homology"/>
<comment type="function">
    <text evidence="1">Catalyzes the NADPH-dependent reduction of N-acetyl-5-glutamyl phosphate to yield N-acetyl-L-glutamate 5-semialdehyde.</text>
</comment>
<comment type="catalytic activity">
    <reaction evidence="1">
        <text>N-acetyl-L-glutamate 5-semialdehyde + phosphate + NADP(+) = N-acetyl-L-glutamyl 5-phosphate + NADPH + H(+)</text>
        <dbReference type="Rhea" id="RHEA:21588"/>
        <dbReference type="ChEBI" id="CHEBI:15378"/>
        <dbReference type="ChEBI" id="CHEBI:29123"/>
        <dbReference type="ChEBI" id="CHEBI:43474"/>
        <dbReference type="ChEBI" id="CHEBI:57783"/>
        <dbReference type="ChEBI" id="CHEBI:57936"/>
        <dbReference type="ChEBI" id="CHEBI:58349"/>
        <dbReference type="EC" id="1.2.1.38"/>
    </reaction>
</comment>
<comment type="pathway">
    <text evidence="1">Amino-acid biosynthesis; L-arginine biosynthesis; N(2)-acetyl-L-ornithine from L-glutamate: step 3/4.</text>
</comment>
<comment type="subcellular location">
    <subcellularLocation>
        <location evidence="1">Cytoplasm</location>
    </subcellularLocation>
</comment>
<comment type="similarity">
    <text evidence="1">Belongs to the NAGSA dehydrogenase family. Type 1 subfamily.</text>
</comment>
<reference key="1">
    <citation type="submission" date="2006-12" db="EMBL/GenBank/DDBJ databases">
        <authorList>
            <person name="Fouts D.E."/>
            <person name="Nelson K.E."/>
            <person name="Sebastian Y."/>
        </authorList>
    </citation>
    <scope>NUCLEOTIDE SEQUENCE [LARGE SCALE GENOMIC DNA]</scope>
    <source>
        <strain>81-176</strain>
    </source>
</reference>
<gene>
    <name evidence="1" type="primary">argC</name>
    <name type="ordered locus">CJJ81176_0249</name>
</gene>